<proteinExistence type="inferred from homology"/>
<dbReference type="EMBL" id="AE008692">
    <property type="protein sequence ID" value="AAV88789.1"/>
    <property type="molecule type" value="Genomic_DNA"/>
</dbReference>
<dbReference type="SMR" id="Q5NR65"/>
<dbReference type="STRING" id="264203.ZMO0165"/>
<dbReference type="KEGG" id="zmo:ZMO0165"/>
<dbReference type="eggNOG" id="COG0823">
    <property type="taxonomic scope" value="Bacteria"/>
</dbReference>
<dbReference type="HOGENOM" id="CLU_047123_0_0_5"/>
<dbReference type="Proteomes" id="UP000001173">
    <property type="component" value="Chromosome"/>
</dbReference>
<dbReference type="GO" id="GO:0042597">
    <property type="term" value="C:periplasmic space"/>
    <property type="evidence" value="ECO:0007669"/>
    <property type="project" value="UniProtKB-SubCell"/>
</dbReference>
<dbReference type="GO" id="GO:0051301">
    <property type="term" value="P:cell division"/>
    <property type="evidence" value="ECO:0007669"/>
    <property type="project" value="UniProtKB-UniRule"/>
</dbReference>
<dbReference type="GO" id="GO:0017038">
    <property type="term" value="P:protein import"/>
    <property type="evidence" value="ECO:0007669"/>
    <property type="project" value="InterPro"/>
</dbReference>
<dbReference type="Gene3D" id="2.120.10.30">
    <property type="entry name" value="TolB, C-terminal domain"/>
    <property type="match status" value="1"/>
</dbReference>
<dbReference type="Gene3D" id="3.40.50.10070">
    <property type="entry name" value="TolB, N-terminal domain"/>
    <property type="match status" value="1"/>
</dbReference>
<dbReference type="HAMAP" id="MF_00671">
    <property type="entry name" value="TolB"/>
    <property type="match status" value="1"/>
</dbReference>
<dbReference type="InterPro" id="IPR011042">
    <property type="entry name" value="6-blade_b-propeller_TolB-like"/>
</dbReference>
<dbReference type="InterPro" id="IPR011659">
    <property type="entry name" value="PD40"/>
</dbReference>
<dbReference type="InterPro" id="IPR014167">
    <property type="entry name" value="Tol-Pal_TolB"/>
</dbReference>
<dbReference type="InterPro" id="IPR007195">
    <property type="entry name" value="TolB_N"/>
</dbReference>
<dbReference type="NCBIfam" id="TIGR02800">
    <property type="entry name" value="propeller_TolB"/>
    <property type="match status" value="1"/>
</dbReference>
<dbReference type="PANTHER" id="PTHR36842:SF1">
    <property type="entry name" value="PROTEIN TOLB"/>
    <property type="match status" value="1"/>
</dbReference>
<dbReference type="PANTHER" id="PTHR36842">
    <property type="entry name" value="PROTEIN TOLB HOMOLOG"/>
    <property type="match status" value="1"/>
</dbReference>
<dbReference type="Pfam" id="PF07676">
    <property type="entry name" value="PD40"/>
    <property type="match status" value="3"/>
</dbReference>
<dbReference type="Pfam" id="PF04052">
    <property type="entry name" value="TolB_N"/>
    <property type="match status" value="1"/>
</dbReference>
<dbReference type="SUPFAM" id="SSF52964">
    <property type="entry name" value="TolB, N-terminal domain"/>
    <property type="match status" value="1"/>
</dbReference>
<dbReference type="SUPFAM" id="SSF69304">
    <property type="entry name" value="Tricorn protease N-terminal domain"/>
    <property type="match status" value="1"/>
</dbReference>
<sequence>MSSVIRKWALTALMAVSSTALFAQNPAASGQAANQGDNRRILRVDITGGISQPMPIAVPVMPTPSSVETLAGTTAVLGRQVASVISNDLKSSGLFTPSQQASLHNVSFPEVTAPQYSYWLSSGAQALVQGFVQANGDGTLTVGCYLYDVFASQEMLHKGFVVKPADWRRAAHKCADAVYTRLTGEGPYFDSRIVYISETGPKNHRLKRLAIMDQDGANHRFLTNGQSMVLTPRFAPNQQTVTYLSYVGNSPRIYVYTLGSGHVRLVVNKPNTTFAPRFSPDGKTIVFSMSVAGNTDIYKVPVSGGQATRLTTSPGIDTAPSFSPDGSKIVFESDRSGSQQIYIMNADGSNQNRISFGSGRYATPVWSPRGDLIAFTKLGGGFHVGVMKTDGSGEQILTNGWQDEGPSWSPNGRVIAFFRTARNSGHTELWSVDLTGVNERHIPTPLDGSDPSWGPLLP</sequence>
<protein>
    <recommendedName>
        <fullName evidence="1">Tol-Pal system protein TolB</fullName>
    </recommendedName>
</protein>
<gene>
    <name evidence="1" type="primary">tolB</name>
    <name type="ordered locus">ZMO0165</name>
</gene>
<reference key="1">
    <citation type="journal article" date="2005" name="Nat. Biotechnol.">
        <title>The genome sequence of the ethanologenic bacterium Zymomonas mobilis ZM4.</title>
        <authorList>
            <person name="Seo J.-S."/>
            <person name="Chong H."/>
            <person name="Park H.S."/>
            <person name="Yoon K.-O."/>
            <person name="Jung C."/>
            <person name="Kim J.J."/>
            <person name="Hong J.H."/>
            <person name="Kim H."/>
            <person name="Kim J.-H."/>
            <person name="Kil J.-I."/>
            <person name="Park C.J."/>
            <person name="Oh H.-M."/>
            <person name="Lee J.-S."/>
            <person name="Jin S.-J."/>
            <person name="Um H.-W."/>
            <person name="Lee H.-J."/>
            <person name="Oh S.-J."/>
            <person name="Kim J.Y."/>
            <person name="Kang H.L."/>
            <person name="Lee S.Y."/>
            <person name="Lee K.J."/>
            <person name="Kang H.S."/>
        </authorList>
    </citation>
    <scope>NUCLEOTIDE SEQUENCE [LARGE SCALE GENOMIC DNA]</scope>
    <source>
        <strain>ATCC 31821 / ZM4 / CP4</strain>
    </source>
</reference>
<accession>Q5NR65</accession>
<keyword id="KW-0131">Cell cycle</keyword>
<keyword id="KW-0132">Cell division</keyword>
<keyword id="KW-0574">Periplasm</keyword>
<keyword id="KW-1185">Reference proteome</keyword>
<keyword id="KW-0732">Signal</keyword>
<name>TOLB_ZYMMO</name>
<organism>
    <name type="scientific">Zymomonas mobilis subsp. mobilis (strain ATCC 31821 / ZM4 / CP4)</name>
    <dbReference type="NCBI Taxonomy" id="264203"/>
    <lineage>
        <taxon>Bacteria</taxon>
        <taxon>Pseudomonadati</taxon>
        <taxon>Pseudomonadota</taxon>
        <taxon>Alphaproteobacteria</taxon>
        <taxon>Sphingomonadales</taxon>
        <taxon>Zymomonadaceae</taxon>
        <taxon>Zymomonas</taxon>
    </lineage>
</organism>
<comment type="function">
    <text evidence="1">Part of the Tol-Pal system, which plays a role in outer membrane invagination during cell division and is important for maintaining outer membrane integrity.</text>
</comment>
<comment type="subunit">
    <text evidence="1">The Tol-Pal system is composed of five core proteins: the inner membrane proteins TolA, TolQ and TolR, the periplasmic protein TolB and the outer membrane protein Pal. They form a network linking the inner and outer membranes and the peptidoglycan layer.</text>
</comment>
<comment type="subcellular location">
    <subcellularLocation>
        <location evidence="1">Periplasm</location>
    </subcellularLocation>
</comment>
<comment type="similarity">
    <text evidence="1">Belongs to the TolB family.</text>
</comment>
<feature type="signal peptide" evidence="1">
    <location>
        <begin position="1"/>
        <end position="23"/>
    </location>
</feature>
<feature type="chain" id="PRO_0000034704" description="Tol-Pal system protein TolB" evidence="1">
    <location>
        <begin position="24"/>
        <end position="458"/>
    </location>
</feature>
<evidence type="ECO:0000255" key="1">
    <source>
        <dbReference type="HAMAP-Rule" id="MF_00671"/>
    </source>
</evidence>